<evidence type="ECO:0000250" key="1"/>
<evidence type="ECO:0000305" key="2"/>
<sequence length="1828" mass="210002">MGAGEERPEALGFNPQKEIVYNLLLPYAHRLDRESNELLAQIKGSLGRAVRLRELWPGVLFWTRKLTTYIRLYGRKFSKEDHVLFVKLLYELVTIPKLEISMMQGFARLLISLLKKKELLSREDLQLPWRPLYEMLERILYSKTEHLGLNWFPNSVEGVLKTLVKACRPYFPDDATAEMLQEWLPLMCPFDVTMQKAISYLELFLPTSLPPDLHCKGFRLWFDEFLTLWVSVQNLPQWEGHLVNLFARLANDNIGYIDWDPYVPKIFTRILRSLNLPVGSNQVLVPRQLANAYDIGHAVIWITALMGGPSKTVQKHLTGLFNSITSFYHPSNNGRWLTKLMKLLQRLPCCIIRRLHRERYKKPSWLTPVPESHRLTDQDVTDFVESIMQPVLLAMFSKTGSLEAAQALQNLALMRPELVIPPVLEKTYPALETLTEPHQLTATLSCVIGVARSLVSGGRWFPEGPTHMLPLLMRALPGVDPNDFSKCMITFQFIATFSTLVPLVDCSSLLQERNDLSEVERELCSATAEFEDFVLQFMDRCFALIESSALEQTREETETEKMTHLESLVELGLSSTFSTILTQCSKEIFKVALEKVFNFAVSNIFETRVSGRMVADLCRAAVKCCPVESLKLFLPHCCNVISHLTINDDVMNDEELDKELLWKLQLLSEITRVDGEKLLPYKEQLVQILHRTLHFTCKQGYTLSCNLLHHLLRSSTLIYPTEYCSVPGGFDKPLSDYFPIKDWGKPGDLWNLNIKWHVPSAEEMDFAYYLLDTFLRPELQKLDLYSSGELEMSRDEVQQCLAIVHNCLTGSGNLLPPLHGERVTHLVTSMVSLNETKLFTGIDHDHSRENYRELISKTLRKLLHYILDHSEDDTKSLFLIIKIISDLLQFQGSHKHEFDSRWKSFTLVKKSMENRLHGKKRHIRALLIDRVMLQHELRTLTVEGCEYKKVHQDMLRDLLRLSTSSYGQVRNKAQQAFFTALGTYNFCCRDLIPLVLEFLRPERQDVTQQQFKGALYCLLGNHGGVCLANLHDWECIVQTWPAMISSGLSKAMSLEKPSIVRLFDDLAEKIHRQYETIGLDFSVPEKCIEIAILLQHAASTSSQLPHPEELALAIKRQGEKNVEAVQNYERLVNTLLDCVTQRNLPWKFEHIGIGFLSLLLRDDYVLPVRAIRYLVQCLNHDALIVRKMAISTVAGILKQLKRTHVKETICPYKISGCPKPESKLVGDRPDNQWLLYDSSNLPNTKEAWESCCFVEKTHWGYSSWPQNMLVYAPADQQPKVGRSREEMSEAEQIIYDHFTDEKFVDQLIKFLSLEDRKGKDKFNPRRFCLFKGLFRNYDDAFLPIIKPHLERLVADSHESTQRCAAEIVAGLIRGSKHWTFEKVENLWNFLCELLRTALSNITVETYSDWGTCIATSCESRDPRKLHWLFELLLESPVSGEGGSFVDACRLYVLQGGLAQQEWRVPELLHRLLMCLEPKLTQVYKNVRERIGSVLTYIFMIDVSLPNTAPTKSPHISDFTGRILGKLKPLMDADEEIQNHVMEENGVGEQDERTQAIKLMKTILKWIMASAGRSFCTGVTEQMQLLPLLFKIAPVENDTNYDELKRDAKTCLSLMSQGLLLPVQVPLVLDVLRQTARSSSWHARYTVLTYIQTMVFYNLFIFIHNEESVQGVRWLILQLMEDEQLEVREMAATTLSGLLQCNFLTMDAAMQAHFEALCKTRLPKKRKRESGMVGDTIPSGDLVKRHAGVLGLSACILSSPYDVPTWMPQLLMDLSVHLNDPQPIEMTVKKTLSNFRRTHHDNWQEHKQQFTDDQLIVLTDLLVSPCYYA</sequence>
<organism>
    <name type="scientific">Xenopus laevis</name>
    <name type="common">African clawed frog</name>
    <dbReference type="NCBI Taxonomy" id="8355"/>
    <lineage>
        <taxon>Eukaryota</taxon>
        <taxon>Metazoa</taxon>
        <taxon>Chordata</taxon>
        <taxon>Craniata</taxon>
        <taxon>Vertebrata</taxon>
        <taxon>Euteleostomi</taxon>
        <taxon>Amphibia</taxon>
        <taxon>Batrachia</taxon>
        <taxon>Anura</taxon>
        <taxon>Pipoidea</taxon>
        <taxon>Pipidae</taxon>
        <taxon>Xenopodinae</taxon>
        <taxon>Xenopus</taxon>
        <taxon>Xenopus</taxon>
    </lineage>
</organism>
<protein>
    <recommendedName>
        <fullName>Proteasome activator complex subunit 4</fullName>
    </recommendedName>
    <alternativeName>
        <fullName>Proteasome activator PA200</fullName>
    </alternativeName>
</protein>
<keyword id="KW-0963">Cytoplasm</keyword>
<keyword id="KW-0227">DNA damage</keyword>
<keyword id="KW-0234">DNA repair</keyword>
<keyword id="KW-0539">Nucleus</keyword>
<keyword id="KW-0647">Proteasome</keyword>
<keyword id="KW-1185">Reference proteome</keyword>
<keyword id="KW-0677">Repeat</keyword>
<reference key="1">
    <citation type="submission" date="2004-05" db="EMBL/GenBank/DDBJ databases">
        <authorList>
            <consortium name="NIH - Xenopus Gene Collection (XGC) project"/>
        </authorList>
    </citation>
    <scope>NUCLEOTIDE SEQUENCE [LARGE SCALE MRNA]</scope>
    <source>
        <tissue>Embryo</tissue>
    </source>
</reference>
<name>PSME4_XENLA</name>
<comment type="function">
    <text evidence="1">Associated component of the proteasome that specifically recognizes acetylated histones and promotes ATP- and ubiquitin-independent degradation of core histones during DNA damage response. Recognizes and binds acetylated histones via its bromodomain-like (BRDL) region and activates the proteasome by opening the gated channel for substrate entry. Binds to the core proteasome via its C-terminus, which occupies the same binding sites as the proteasomal ATPases, opening the closed structure of the proteasome via an active gating mechanism. involved in DNA damage response in somatic cells: binds to acetylated histones and promotes degradation of histones (By similarity).</text>
</comment>
<comment type="subunit">
    <text evidence="1">Homodimer. Interacts with the 20S and 26S proteasomes (By similarity).</text>
</comment>
<comment type="subcellular location">
    <subcellularLocation>
        <location evidence="1">Cytoplasm</location>
        <location evidence="1">Cytosol</location>
    </subcellularLocation>
    <subcellularLocation>
        <location evidence="1">Nucleus</location>
    </subcellularLocation>
    <subcellularLocation>
        <location evidence="1">Nucleus speckle</location>
    </subcellularLocation>
</comment>
<comment type="domain">
    <text evidence="1">The bromodomain-like (BRDL) region specifically recognizes and binds acetylated histones.</text>
</comment>
<comment type="similarity">
    <text evidence="2">Belongs to the BLM10 family.</text>
</comment>
<proteinExistence type="evidence at transcript level"/>
<accession>Q6NRP2</accession>
<dbReference type="EMBL" id="BC070702">
    <property type="protein sequence ID" value="AAH70702.1"/>
    <property type="molecule type" value="mRNA"/>
</dbReference>
<dbReference type="RefSeq" id="NP_001084866.1">
    <property type="nucleotide sequence ID" value="NM_001091397.1"/>
</dbReference>
<dbReference type="SMR" id="Q6NRP2"/>
<dbReference type="DNASU" id="431915"/>
<dbReference type="GeneID" id="431915"/>
<dbReference type="KEGG" id="xla:431915"/>
<dbReference type="AGR" id="Xenbase:XB-GENE-5841450"/>
<dbReference type="CTD" id="431915"/>
<dbReference type="Xenbase" id="XB-GENE-5841450">
    <property type="gene designation" value="psme4.L"/>
</dbReference>
<dbReference type="OMA" id="ECTQLVP"/>
<dbReference type="OrthoDB" id="17907at2759"/>
<dbReference type="Proteomes" id="UP000186698">
    <property type="component" value="Chromosome 5L"/>
</dbReference>
<dbReference type="Bgee" id="431915">
    <property type="expression patterns" value="Expressed in egg cell and 19 other cell types or tissues"/>
</dbReference>
<dbReference type="GO" id="GO:0005829">
    <property type="term" value="C:cytosol"/>
    <property type="evidence" value="ECO:0000250"/>
    <property type="project" value="UniProtKB"/>
</dbReference>
<dbReference type="GO" id="GO:0016607">
    <property type="term" value="C:nuclear speck"/>
    <property type="evidence" value="ECO:0007669"/>
    <property type="project" value="UniProtKB-SubCell"/>
</dbReference>
<dbReference type="GO" id="GO:0005634">
    <property type="term" value="C:nucleus"/>
    <property type="evidence" value="ECO:0000250"/>
    <property type="project" value="UniProtKB"/>
</dbReference>
<dbReference type="GO" id="GO:1990111">
    <property type="term" value="C:spermatoproteasome complex"/>
    <property type="evidence" value="ECO:0000250"/>
    <property type="project" value="UniProtKB"/>
</dbReference>
<dbReference type="GO" id="GO:0070577">
    <property type="term" value="F:lysine-acetylated histone binding"/>
    <property type="evidence" value="ECO:0000318"/>
    <property type="project" value="GO_Central"/>
</dbReference>
<dbReference type="GO" id="GO:0016504">
    <property type="term" value="F:peptidase activator activity"/>
    <property type="evidence" value="ECO:0000250"/>
    <property type="project" value="UniProtKB"/>
</dbReference>
<dbReference type="GO" id="GO:0070628">
    <property type="term" value="F:proteasome binding"/>
    <property type="evidence" value="ECO:0000318"/>
    <property type="project" value="GO_Central"/>
</dbReference>
<dbReference type="GO" id="GO:0006974">
    <property type="term" value="P:DNA damage response"/>
    <property type="evidence" value="ECO:0000250"/>
    <property type="project" value="UniProtKB"/>
</dbReference>
<dbReference type="GO" id="GO:0006281">
    <property type="term" value="P:DNA repair"/>
    <property type="evidence" value="ECO:0000250"/>
    <property type="project" value="UniProtKB"/>
</dbReference>
<dbReference type="GO" id="GO:0010499">
    <property type="term" value="P:proteasomal ubiquitin-independent protein catabolic process"/>
    <property type="evidence" value="ECO:0000250"/>
    <property type="project" value="UniProtKB"/>
</dbReference>
<dbReference type="GO" id="GO:0035092">
    <property type="term" value="P:sperm DNA condensation"/>
    <property type="evidence" value="ECO:0000250"/>
    <property type="project" value="UniProtKB"/>
</dbReference>
<dbReference type="FunFam" id="1.25.10.10:FF:000183">
    <property type="entry name" value="Proteasome activator complex subunit 4"/>
    <property type="match status" value="1"/>
</dbReference>
<dbReference type="Gene3D" id="1.25.10.10">
    <property type="entry name" value="Leucine-rich Repeat Variant"/>
    <property type="match status" value="1"/>
</dbReference>
<dbReference type="InterPro" id="IPR011989">
    <property type="entry name" value="ARM-like"/>
</dbReference>
<dbReference type="InterPro" id="IPR016024">
    <property type="entry name" value="ARM-type_fold"/>
</dbReference>
<dbReference type="InterPro" id="IPR032430">
    <property type="entry name" value="Blm10_mid"/>
</dbReference>
<dbReference type="InterPro" id="IPR055455">
    <property type="entry name" value="HEAT_PSME4"/>
</dbReference>
<dbReference type="InterPro" id="IPR035309">
    <property type="entry name" value="PSME4"/>
</dbReference>
<dbReference type="InterPro" id="IPR021843">
    <property type="entry name" value="PSME4_C"/>
</dbReference>
<dbReference type="PANTHER" id="PTHR32170">
    <property type="entry name" value="PROTEASOME ACTIVATOR COMPLEX SUBUNIT 4"/>
    <property type="match status" value="1"/>
</dbReference>
<dbReference type="PANTHER" id="PTHR32170:SF3">
    <property type="entry name" value="PROTEASOME ACTIVATOR COMPLEX SUBUNIT 4"/>
    <property type="match status" value="1"/>
</dbReference>
<dbReference type="Pfam" id="PF23096">
    <property type="entry name" value="HEAT_PSME4"/>
    <property type="match status" value="1"/>
</dbReference>
<dbReference type="Pfam" id="PF16507">
    <property type="entry name" value="HEAT_PSME4_mid"/>
    <property type="match status" value="1"/>
</dbReference>
<dbReference type="Pfam" id="PF11919">
    <property type="entry name" value="PSME4_C"/>
    <property type="match status" value="1"/>
</dbReference>
<dbReference type="SUPFAM" id="SSF48371">
    <property type="entry name" value="ARM repeat"/>
    <property type="match status" value="2"/>
</dbReference>
<gene>
    <name type="primary">psme4</name>
</gene>
<feature type="chain" id="PRO_0000280720" description="Proteasome activator complex subunit 4">
    <location>
        <begin position="1"/>
        <end position="1828"/>
    </location>
</feature>
<feature type="repeat" description="HEAT 1">
    <location>
        <begin position="462"/>
        <end position="506"/>
    </location>
</feature>
<feature type="repeat" description="HEAT 2">
    <location>
        <begin position="985"/>
        <end position="1024"/>
    </location>
</feature>
<feature type="repeat" description="HEAT 3">
    <location>
        <begin position="1164"/>
        <end position="1202"/>
    </location>
</feature>
<feature type="repeat" description="HEAT 4">
    <location>
        <begin position="1339"/>
        <end position="1377"/>
    </location>
</feature>
<feature type="repeat" description="HEAT 5">
    <location>
        <begin position="1621"/>
        <end position="1659"/>
    </location>
</feature>
<feature type="repeat" description="HEAT 6">
    <location>
        <begin position="1665"/>
        <end position="1703"/>
    </location>
</feature>
<feature type="region of interest" description="Bromodomain-like (BRDL)" evidence="1">
    <location>
        <begin position="1635"/>
        <end position="1723"/>
    </location>
</feature>